<sequence>MDVFKQSEVWFVIGSQNLYGPKTLQQVMDNAHQVVNSLNSEAGLPVKLVLKPLVTTPDEITALCREANYDTACIGIMTWLHTFSPAKMWIGGLSILNKPLLQFHTQFNAQIPWETMDMDFMNLNQTAHGGREFGFIGARMRQQHSVITGHWQDKEAHQRIGQWMRVAAAKQESQQLKVARFGDNMREVAVTEGDKVAAQIQFGYSVNAYGIGDLVAVVDAVSKGDIDTLVEEYEATYRFSDAVKLNGDKRENLLDAARIELGMKRFLEQGGFKAFTTNFENLYGLKQLPGLAVQRLMQQGYGFGGEGDWKTAALLRILKVMGTGLKGGTSFMEDYTYNFQPGNDLVVGSHMLEVCPSIAKEEKPLLDVQHLGIGGKADPARLIFSTPAGPALNASLIDMGNRFRLLVNVVDTVEQPHPLPKLPVARAIWQAQPSLATAAEAWIIAGGAHHTVFSQAVGVDELRLYAEMHGIEFLLIDNDTTLPAFKNEIRWNEVYYQLNR</sequence>
<gene>
    <name evidence="1" type="primary">araA</name>
    <name type="ordered locus">YPK_2001</name>
</gene>
<comment type="function">
    <text evidence="1">Catalyzes the conversion of L-arabinose to L-ribulose.</text>
</comment>
<comment type="catalytic activity">
    <reaction evidence="1">
        <text>beta-L-arabinopyranose = L-ribulose</text>
        <dbReference type="Rhea" id="RHEA:14821"/>
        <dbReference type="ChEBI" id="CHEBI:16880"/>
        <dbReference type="ChEBI" id="CHEBI:40886"/>
        <dbReference type="EC" id="5.3.1.4"/>
    </reaction>
</comment>
<comment type="cofactor">
    <cofactor evidence="1">
        <name>Mn(2+)</name>
        <dbReference type="ChEBI" id="CHEBI:29035"/>
    </cofactor>
    <text evidence="1">Binds 1 Mn(2+) ion per subunit.</text>
</comment>
<comment type="pathway">
    <text evidence="1">Carbohydrate degradation; L-arabinose degradation via L-ribulose; D-xylulose 5-phosphate from L-arabinose (bacterial route): step 1/3.</text>
</comment>
<comment type="subunit">
    <text evidence="1">Homohexamer.</text>
</comment>
<comment type="similarity">
    <text evidence="1">Belongs to the arabinose isomerase family.</text>
</comment>
<name>ARAA_YERPY</name>
<protein>
    <recommendedName>
        <fullName evidence="1">L-arabinose isomerase</fullName>
        <ecNumber evidence="1">5.3.1.4</ecNumber>
    </recommendedName>
</protein>
<keyword id="KW-0054">Arabinose catabolism</keyword>
<keyword id="KW-0119">Carbohydrate metabolism</keyword>
<keyword id="KW-0413">Isomerase</keyword>
<keyword id="KW-0464">Manganese</keyword>
<keyword id="KW-0479">Metal-binding</keyword>
<reference key="1">
    <citation type="submission" date="2008-02" db="EMBL/GenBank/DDBJ databases">
        <title>Complete sequence of Yersinia pseudotuberculosis YPIII.</title>
        <authorList>
            <consortium name="US DOE Joint Genome Institute"/>
            <person name="Copeland A."/>
            <person name="Lucas S."/>
            <person name="Lapidus A."/>
            <person name="Glavina del Rio T."/>
            <person name="Dalin E."/>
            <person name="Tice H."/>
            <person name="Bruce D."/>
            <person name="Goodwin L."/>
            <person name="Pitluck S."/>
            <person name="Munk A.C."/>
            <person name="Brettin T."/>
            <person name="Detter J.C."/>
            <person name="Han C."/>
            <person name="Tapia R."/>
            <person name="Schmutz J."/>
            <person name="Larimer F."/>
            <person name="Land M."/>
            <person name="Hauser L."/>
            <person name="Challacombe J.F."/>
            <person name="Green L."/>
            <person name="Lindler L.E."/>
            <person name="Nikolich M.P."/>
            <person name="Richardson P."/>
        </authorList>
    </citation>
    <scope>NUCLEOTIDE SEQUENCE [LARGE SCALE GENOMIC DNA]</scope>
    <source>
        <strain>YPIII</strain>
    </source>
</reference>
<accession>B1JKM7</accession>
<proteinExistence type="inferred from homology"/>
<evidence type="ECO:0000255" key="1">
    <source>
        <dbReference type="HAMAP-Rule" id="MF_00519"/>
    </source>
</evidence>
<organism>
    <name type="scientific">Yersinia pseudotuberculosis serotype O:3 (strain YPIII)</name>
    <dbReference type="NCBI Taxonomy" id="502800"/>
    <lineage>
        <taxon>Bacteria</taxon>
        <taxon>Pseudomonadati</taxon>
        <taxon>Pseudomonadota</taxon>
        <taxon>Gammaproteobacteria</taxon>
        <taxon>Enterobacterales</taxon>
        <taxon>Yersiniaceae</taxon>
        <taxon>Yersinia</taxon>
    </lineage>
</organism>
<feature type="chain" id="PRO_1000127624" description="L-arabinose isomerase">
    <location>
        <begin position="1"/>
        <end position="500"/>
    </location>
</feature>
<feature type="binding site" evidence="1">
    <location>
        <position position="306"/>
    </location>
    <ligand>
        <name>Mn(2+)</name>
        <dbReference type="ChEBI" id="CHEBI:29035"/>
    </ligand>
</feature>
<feature type="binding site" evidence="1">
    <location>
        <position position="333"/>
    </location>
    <ligand>
        <name>Mn(2+)</name>
        <dbReference type="ChEBI" id="CHEBI:29035"/>
    </ligand>
</feature>
<feature type="binding site" evidence="1">
    <location>
        <position position="350"/>
    </location>
    <ligand>
        <name>Mn(2+)</name>
        <dbReference type="ChEBI" id="CHEBI:29035"/>
    </ligand>
</feature>
<feature type="binding site" evidence="1">
    <location>
        <position position="450"/>
    </location>
    <ligand>
        <name>Mn(2+)</name>
        <dbReference type="ChEBI" id="CHEBI:29035"/>
    </ligand>
</feature>
<dbReference type="EC" id="5.3.1.4" evidence="1"/>
<dbReference type="EMBL" id="CP000950">
    <property type="protein sequence ID" value="ACA68288.1"/>
    <property type="molecule type" value="Genomic_DNA"/>
</dbReference>
<dbReference type="RefSeq" id="WP_012105092.1">
    <property type="nucleotide sequence ID" value="NZ_CP009792.1"/>
</dbReference>
<dbReference type="SMR" id="B1JKM7"/>
<dbReference type="KEGG" id="ypy:YPK_2001"/>
<dbReference type="PATRIC" id="fig|502800.11.peg.2676"/>
<dbReference type="UniPathway" id="UPA00145">
    <property type="reaction ID" value="UER00565"/>
</dbReference>
<dbReference type="GO" id="GO:0005829">
    <property type="term" value="C:cytosol"/>
    <property type="evidence" value="ECO:0007669"/>
    <property type="project" value="TreeGrafter"/>
</dbReference>
<dbReference type="GO" id="GO:0008733">
    <property type="term" value="F:L-arabinose isomerase activity"/>
    <property type="evidence" value="ECO:0007669"/>
    <property type="project" value="UniProtKB-UniRule"/>
</dbReference>
<dbReference type="GO" id="GO:0030145">
    <property type="term" value="F:manganese ion binding"/>
    <property type="evidence" value="ECO:0007669"/>
    <property type="project" value="UniProtKB-UniRule"/>
</dbReference>
<dbReference type="GO" id="GO:0019569">
    <property type="term" value="P:L-arabinose catabolic process to xylulose 5-phosphate"/>
    <property type="evidence" value="ECO:0007669"/>
    <property type="project" value="UniProtKB-UniRule"/>
</dbReference>
<dbReference type="CDD" id="cd03557">
    <property type="entry name" value="L-arabinose_isomerase"/>
    <property type="match status" value="1"/>
</dbReference>
<dbReference type="FunFam" id="3.40.50.10940:FF:000001">
    <property type="entry name" value="L-arabinose isomerase"/>
    <property type="match status" value="1"/>
</dbReference>
<dbReference type="Gene3D" id="3.40.50.10940">
    <property type="match status" value="1"/>
</dbReference>
<dbReference type="HAMAP" id="MF_00519">
    <property type="entry name" value="Arabinose_Isome"/>
    <property type="match status" value="1"/>
</dbReference>
<dbReference type="InterPro" id="IPR024664">
    <property type="entry name" value="Ara_Isoase_C"/>
</dbReference>
<dbReference type="InterPro" id="IPR055390">
    <property type="entry name" value="AraA_central"/>
</dbReference>
<dbReference type="InterPro" id="IPR055389">
    <property type="entry name" value="AraA_N"/>
</dbReference>
<dbReference type="InterPro" id="IPR038583">
    <property type="entry name" value="AraA_N_sf"/>
</dbReference>
<dbReference type="InterPro" id="IPR004216">
    <property type="entry name" value="Fuc/Ara_isomerase_C"/>
</dbReference>
<dbReference type="InterPro" id="IPR009015">
    <property type="entry name" value="Fucose_isomerase_N/cen_sf"/>
</dbReference>
<dbReference type="InterPro" id="IPR003762">
    <property type="entry name" value="Lara_isomerase"/>
</dbReference>
<dbReference type="NCBIfam" id="NF002795">
    <property type="entry name" value="PRK02929.1"/>
    <property type="match status" value="1"/>
</dbReference>
<dbReference type="PANTHER" id="PTHR38464">
    <property type="entry name" value="L-ARABINOSE ISOMERASE"/>
    <property type="match status" value="1"/>
</dbReference>
<dbReference type="PANTHER" id="PTHR38464:SF1">
    <property type="entry name" value="L-ARABINOSE ISOMERASE"/>
    <property type="match status" value="1"/>
</dbReference>
<dbReference type="Pfam" id="PF24856">
    <property type="entry name" value="AraA_central"/>
    <property type="match status" value="1"/>
</dbReference>
<dbReference type="Pfam" id="PF02610">
    <property type="entry name" value="AraA_N"/>
    <property type="match status" value="1"/>
</dbReference>
<dbReference type="Pfam" id="PF11762">
    <property type="entry name" value="Arabinose_Iso_C"/>
    <property type="match status" value="1"/>
</dbReference>
<dbReference type="PIRSF" id="PIRSF001478">
    <property type="entry name" value="L-ara_isomerase"/>
    <property type="match status" value="1"/>
</dbReference>
<dbReference type="SUPFAM" id="SSF50443">
    <property type="entry name" value="FucI/AraA C-terminal domain-like"/>
    <property type="match status" value="1"/>
</dbReference>
<dbReference type="SUPFAM" id="SSF53743">
    <property type="entry name" value="FucI/AraA N-terminal and middle domains"/>
    <property type="match status" value="1"/>
</dbReference>